<gene>
    <name type="primary">cdhC2</name>
    <name type="ordered locus">MM_2087</name>
</gene>
<name>ACDB2_METMA</name>
<comment type="function">
    <text evidence="2">Part of a complex that catalyzes the reversible cleavage of acetyl-CoA, allowing growth on acetate as sole source of carbon and energy. The alpha-epsilon complex generates CO from CO(2), while the beta subunit (this protein) combines the CO with CoA and a methyl group to form acetyl-CoA. The methyl group, which is incorporated into acetyl-CoA, is transferred to the beta subunit by a corrinoid iron-sulfur protein (the gamma-delta complex).</text>
</comment>
<comment type="catalytic activity">
    <reaction evidence="2">
        <text>Co(I)-[corrinoid Fe-S protein] + acetyl-CoA + H(+) = methyl-Co(III)-[corrinoid Fe-S protein] + CO + CoA</text>
        <dbReference type="Rhea" id="RHEA:45212"/>
        <dbReference type="Rhea" id="RHEA-COMP:11110"/>
        <dbReference type="Rhea" id="RHEA-COMP:11111"/>
        <dbReference type="ChEBI" id="CHEBI:15378"/>
        <dbReference type="ChEBI" id="CHEBI:17245"/>
        <dbReference type="ChEBI" id="CHEBI:57287"/>
        <dbReference type="ChEBI" id="CHEBI:57288"/>
        <dbReference type="ChEBI" id="CHEBI:85033"/>
        <dbReference type="ChEBI" id="CHEBI:85035"/>
        <dbReference type="EC" id="2.3.1.169"/>
    </reaction>
</comment>
<comment type="cofactor">
    <cofactor>
        <name>[Ni-Fe-S] cluster</name>
        <dbReference type="ChEBI" id="CHEBI:60400"/>
    </cofactor>
    <text>Binds 1 [Ni-Fe-S] cluster.</text>
</comment>
<comment type="pathway">
    <text>One-carbon metabolism; methanogenesis from acetate.</text>
</comment>
<comment type="subunit">
    <text evidence="3">Monomer. The ACDS complex is made up of alpha, epsilon, beta, gamma and delta chains with a probable stoichiometry of (alpha(2)epsilon(2))(4)-beta(8)-(gamma(1)delta(1))(8) (Potential).</text>
</comment>
<comment type="similarity">
    <text evidence="3">Belongs to the CdhC family.</text>
</comment>
<sequence length="470" mass="52364">MADEFPFEISPMFEGERVRKEGMFVELGGPKSLGLELVRAADMDAIEDDKVTIIGPDLKDMEEGKTYPWAMIFNIGGELVEPDLESVVERRVHDFINYCQGIMHLNQRYDVWMRVSKDTAAKMDSFEPFGKAVMMLFKTELPFIEKMQVTFYTDKDEVEKQMETAKEIFKARDARTKDLHDEDVEVFYGCTLCQSFAPTNVCVVSPDRISLCGAINWFDGRAAAKVDPEGPQFEIAKGDLIDAVTGEYTGVNEIAKKLSSGEFDKIKLHSFFDCPHTSCGCFEVVGFYIPEVDGIGWVDREYQGMAPNGIGFSTMAGQTGGGKQIVGFLGIGVNYFYSPKFIQADGGWNRVVWLPSKLKEKIDEAIPADLKDKIATENDASDIESLKAFLQEKNHPVVATWAAAEEEEEEEEEEEEVAVAAAPMMMPAAGFQMPAMPMMSGGSSGGIKLTFKNAKITIDRMIISEKKEKK</sequence>
<organism>
    <name type="scientific">Methanosarcina mazei (strain ATCC BAA-159 / DSM 3647 / Goe1 / Go1 / JCM 11833 / OCM 88)</name>
    <name type="common">Methanosarcina frisia</name>
    <dbReference type="NCBI Taxonomy" id="192952"/>
    <lineage>
        <taxon>Archaea</taxon>
        <taxon>Methanobacteriati</taxon>
        <taxon>Methanobacteriota</taxon>
        <taxon>Stenosarchaea group</taxon>
        <taxon>Methanomicrobia</taxon>
        <taxon>Methanosarcinales</taxon>
        <taxon>Methanosarcinaceae</taxon>
        <taxon>Methanosarcina</taxon>
    </lineage>
</organism>
<protein>
    <recommendedName>
        <fullName>Acetyl-CoA decarbonylase/synthase complex subunit beta 2</fullName>
        <shortName>ACDS complex subunit beta 2</shortName>
        <ecNumber evidence="2">2.3.1.169</ecNumber>
    </recommendedName>
    <alternativeName>
        <fullName>ACDS complex acyltransferase 2</fullName>
    </alternativeName>
</protein>
<proteinExistence type="inferred from homology"/>
<reference key="1">
    <citation type="journal article" date="2002" name="J. Mol. Microbiol. Biotechnol.">
        <title>The genome of Methanosarcina mazei: evidence for lateral gene transfer between Bacteria and Archaea.</title>
        <authorList>
            <person name="Deppenmeier U."/>
            <person name="Johann A."/>
            <person name="Hartsch T."/>
            <person name="Merkl R."/>
            <person name="Schmitz R.A."/>
            <person name="Martinez-Arias R."/>
            <person name="Henne A."/>
            <person name="Wiezer A."/>
            <person name="Baeumer S."/>
            <person name="Jacobi C."/>
            <person name="Brueggemann H."/>
            <person name="Lienard T."/>
            <person name="Christmann A."/>
            <person name="Boemecke M."/>
            <person name="Steckel S."/>
            <person name="Bhattacharyya A."/>
            <person name="Lykidis A."/>
            <person name="Overbeek R."/>
            <person name="Klenk H.-P."/>
            <person name="Gunsalus R.P."/>
            <person name="Fritz H.-J."/>
            <person name="Gottschalk G."/>
        </authorList>
    </citation>
    <scope>NUCLEOTIDE SEQUENCE [LARGE SCALE GENOMIC DNA]</scope>
    <source>
        <strain>ATCC BAA-159 / DSM 3647 / Goe1 / Go1 / JCM 11833 / OCM 88</strain>
    </source>
</reference>
<evidence type="ECO:0000255" key="1"/>
<evidence type="ECO:0000255" key="2">
    <source>
        <dbReference type="HAMAP-Rule" id="MF_01138"/>
    </source>
</evidence>
<evidence type="ECO:0000305" key="3"/>
<accession>Q8PV85</accession>
<keyword id="KW-0012">Acyltransferase</keyword>
<keyword id="KW-0408">Iron</keyword>
<keyword id="KW-0411">Iron-sulfur</keyword>
<keyword id="KW-0479">Metal-binding</keyword>
<keyword id="KW-0484">Methanogenesis</keyword>
<keyword id="KW-0533">Nickel</keyword>
<keyword id="KW-0808">Transferase</keyword>
<feature type="chain" id="PRO_0000155105" description="Acetyl-CoA decarbonylase/synthase complex subunit beta 2">
    <location>
        <begin position="1"/>
        <end position="470"/>
    </location>
</feature>
<feature type="binding site" evidence="1">
    <location>
        <position position="190"/>
    </location>
    <ligand>
        <name>[Ni-Fe-S] cluster</name>
        <dbReference type="ChEBI" id="CHEBI:60400"/>
    </ligand>
</feature>
<feature type="binding site" evidence="1">
    <location>
        <position position="193"/>
    </location>
    <ligand>
        <name>[Ni-Fe-S] cluster</name>
        <dbReference type="ChEBI" id="CHEBI:60400"/>
    </ligand>
</feature>
<feature type="binding site" evidence="1">
    <location>
        <position position="279"/>
    </location>
    <ligand>
        <name>[Ni-Fe-S] cluster</name>
        <dbReference type="ChEBI" id="CHEBI:60400"/>
    </ligand>
</feature>
<feature type="binding site" evidence="1">
    <location>
        <position position="281"/>
    </location>
    <ligand>
        <name>[Ni-Fe-S] cluster</name>
        <dbReference type="ChEBI" id="CHEBI:60400"/>
    </ligand>
</feature>
<dbReference type="EC" id="2.3.1.169" evidence="2"/>
<dbReference type="EMBL" id="AE008384">
    <property type="protein sequence ID" value="AAM31783.1"/>
    <property type="molecule type" value="Genomic_DNA"/>
</dbReference>
<dbReference type="RefSeq" id="WP_011034018.1">
    <property type="nucleotide sequence ID" value="NC_003901.1"/>
</dbReference>
<dbReference type="SMR" id="Q8PV85"/>
<dbReference type="GeneID" id="1480429"/>
<dbReference type="KEGG" id="mma:MM_2087"/>
<dbReference type="PATRIC" id="fig|192952.21.peg.2396"/>
<dbReference type="eggNOG" id="arCOG04360">
    <property type="taxonomic scope" value="Archaea"/>
</dbReference>
<dbReference type="HOGENOM" id="CLU_613408_0_0_2"/>
<dbReference type="UniPathway" id="UPA00642"/>
<dbReference type="Proteomes" id="UP000000595">
    <property type="component" value="Chromosome"/>
</dbReference>
<dbReference type="GO" id="GO:0016407">
    <property type="term" value="F:acetyltransferase activity"/>
    <property type="evidence" value="ECO:0007669"/>
    <property type="project" value="UniProtKB-UniRule"/>
</dbReference>
<dbReference type="GO" id="GO:0043885">
    <property type="term" value="F:anaerobic carbon-monoxide dehydrogenase activity"/>
    <property type="evidence" value="ECO:0007669"/>
    <property type="project" value="InterPro"/>
</dbReference>
<dbReference type="GO" id="GO:0043884">
    <property type="term" value="F:CO-methylating acetyl-CoA synthase activity"/>
    <property type="evidence" value="ECO:0007669"/>
    <property type="project" value="UniProtKB-EC"/>
</dbReference>
<dbReference type="GO" id="GO:0005506">
    <property type="term" value="F:iron ion binding"/>
    <property type="evidence" value="ECO:0007669"/>
    <property type="project" value="UniProtKB-UniRule"/>
</dbReference>
<dbReference type="GO" id="GO:0051536">
    <property type="term" value="F:iron-sulfur cluster binding"/>
    <property type="evidence" value="ECO:0007669"/>
    <property type="project" value="UniProtKB-KW"/>
</dbReference>
<dbReference type="GO" id="GO:0016151">
    <property type="term" value="F:nickel cation binding"/>
    <property type="evidence" value="ECO:0007669"/>
    <property type="project" value="UniProtKB-UniRule"/>
</dbReference>
<dbReference type="GO" id="GO:0006084">
    <property type="term" value="P:acetyl-CoA metabolic process"/>
    <property type="evidence" value="ECO:0007669"/>
    <property type="project" value="InterPro"/>
</dbReference>
<dbReference type="GO" id="GO:0019385">
    <property type="term" value="P:methanogenesis, from acetate"/>
    <property type="evidence" value="ECO:0007669"/>
    <property type="project" value="UniProtKB-UniRule"/>
</dbReference>
<dbReference type="FunFam" id="3.40.970.20:FF:000001">
    <property type="entry name" value="Acetyl-CoA decarbonylase/synthase complex subunit beta"/>
    <property type="match status" value="1"/>
</dbReference>
<dbReference type="FunFam" id="3.40.1470.10:FF:000001">
    <property type="entry name" value="Acetyl-CoA decarbonylase/synthase complex subunit beta 1"/>
    <property type="match status" value="1"/>
</dbReference>
<dbReference type="FunFam" id="3.30.1650.10:FF:000001">
    <property type="entry name" value="Acetyl-CoA decarbonylase/synthase complex subunit beta 2"/>
    <property type="match status" value="1"/>
</dbReference>
<dbReference type="Gene3D" id="3.30.1650.10">
    <property type="entry name" value="Bifunctional carbon monoxide dehydrogenase/acetyl-coa synthase(codh/acs), Chain M, domain 3"/>
    <property type="match status" value="1"/>
</dbReference>
<dbReference type="Gene3D" id="3.40.1470.10">
    <property type="entry name" value="Bifunctional carbon monoxide dehydrogenase/acetyl-coa synthase(codh/acs), Chain M, domain 5"/>
    <property type="match status" value="1"/>
</dbReference>
<dbReference type="Gene3D" id="3.40.970.20">
    <property type="entry name" value="Carbon monoxide dehydrogenase alpha subunit. Chain D, domain 4"/>
    <property type="match status" value="1"/>
</dbReference>
<dbReference type="HAMAP" id="MF_01138">
    <property type="entry name" value="CdhC"/>
    <property type="match status" value="1"/>
</dbReference>
<dbReference type="InterPro" id="IPR045822">
    <property type="entry name" value="ACS_CODH_B_C"/>
</dbReference>
<dbReference type="InterPro" id="IPR004461">
    <property type="entry name" value="CO_DH/Ac-CoA_synth_bsu"/>
</dbReference>
<dbReference type="InterPro" id="IPR038571">
    <property type="entry name" value="CO_DH/Ac-CoA_synth_bsu_3_sf"/>
</dbReference>
<dbReference type="InterPro" id="IPR023432">
    <property type="entry name" value="CO_DH/Ac-CoA_synth_bsu_arc"/>
</dbReference>
<dbReference type="InterPro" id="IPR011254">
    <property type="entry name" value="Prismane-like_sf"/>
</dbReference>
<dbReference type="NCBIfam" id="TIGR00316">
    <property type="entry name" value="cdhC"/>
    <property type="match status" value="1"/>
</dbReference>
<dbReference type="NCBIfam" id="NF003379">
    <property type="entry name" value="PRK04456.1"/>
    <property type="match status" value="1"/>
</dbReference>
<dbReference type="PANTHER" id="PTHR42281">
    <property type="match status" value="1"/>
</dbReference>
<dbReference type="PANTHER" id="PTHR42281:SF1">
    <property type="entry name" value="ACETYL-COA DECARBONYLASE_SYNTHASE COMPLEX SUBUNIT BETA 1"/>
    <property type="match status" value="1"/>
</dbReference>
<dbReference type="Pfam" id="PF19436">
    <property type="entry name" value="ACS_CODH_B_C"/>
    <property type="match status" value="1"/>
</dbReference>
<dbReference type="Pfam" id="PF03598">
    <property type="entry name" value="CdhC"/>
    <property type="match status" value="1"/>
</dbReference>
<dbReference type="SUPFAM" id="SSF56821">
    <property type="entry name" value="Prismane protein-like"/>
    <property type="match status" value="1"/>
</dbReference>